<sequence length="275" mass="29357">MANFTAADVKELRDRLGAGMMDSKNALVEADGDIEKAIEILRLKGQKGNAKRGDRSTAEGLVAASEQDGAATLIELACETDFVAKNDKFIALSESVLAAVVAAGASTVEEALQAPAGEQTVDQLISDRAAILGEKIALRRVARLAGEHQEIYLHRTSKDLPPQVGVVVDYSGTDAETARSIAQHIAFANPEYLAREDVPADKVEAERAIVTEISRNEGKPEAALPKIIEGRLTGFFKQVALLEQDYAKDNKQSVKKVVEAAGLTVTGFARFKVGA</sequence>
<keyword id="KW-0963">Cytoplasm</keyword>
<keyword id="KW-0251">Elongation factor</keyword>
<keyword id="KW-0648">Protein biosynthesis</keyword>
<feature type="chain" id="PRO_1000074857" description="Elongation factor Ts">
    <location>
        <begin position="1"/>
        <end position="275"/>
    </location>
</feature>
<feature type="region of interest" description="Involved in Mg(2+) ion dislocation from EF-Tu" evidence="1">
    <location>
        <begin position="80"/>
        <end position="83"/>
    </location>
</feature>
<comment type="function">
    <text evidence="1">Associates with the EF-Tu.GDP complex and induces the exchange of GDP to GTP. It remains bound to the aminoacyl-tRNA.EF-Tu.GTP complex up to the GTP hydrolysis stage on the ribosome.</text>
</comment>
<comment type="subcellular location">
    <subcellularLocation>
        <location evidence="1">Cytoplasm</location>
    </subcellularLocation>
</comment>
<comment type="similarity">
    <text evidence="1">Belongs to the EF-Ts family.</text>
</comment>
<dbReference type="EMBL" id="AM849034">
    <property type="protein sequence ID" value="CAQ00892.1"/>
    <property type="molecule type" value="Genomic_DNA"/>
</dbReference>
<dbReference type="RefSeq" id="WP_012298200.1">
    <property type="nucleotide sequence ID" value="NZ_MZMN01000003.1"/>
</dbReference>
<dbReference type="SMR" id="B0REP5"/>
<dbReference type="STRING" id="31964.CMS0772"/>
<dbReference type="KEGG" id="cms:CMS0772"/>
<dbReference type="eggNOG" id="COG0264">
    <property type="taxonomic scope" value="Bacteria"/>
</dbReference>
<dbReference type="HOGENOM" id="CLU_047155_0_0_11"/>
<dbReference type="OrthoDB" id="9808348at2"/>
<dbReference type="Proteomes" id="UP000001318">
    <property type="component" value="Chromosome"/>
</dbReference>
<dbReference type="GO" id="GO:0005737">
    <property type="term" value="C:cytoplasm"/>
    <property type="evidence" value="ECO:0007669"/>
    <property type="project" value="UniProtKB-SubCell"/>
</dbReference>
<dbReference type="GO" id="GO:0003746">
    <property type="term" value="F:translation elongation factor activity"/>
    <property type="evidence" value="ECO:0007669"/>
    <property type="project" value="UniProtKB-UniRule"/>
</dbReference>
<dbReference type="CDD" id="cd14275">
    <property type="entry name" value="UBA_EF-Ts"/>
    <property type="match status" value="1"/>
</dbReference>
<dbReference type="FunFam" id="1.10.286.20:FF:000001">
    <property type="entry name" value="Elongation factor Ts"/>
    <property type="match status" value="1"/>
</dbReference>
<dbReference type="FunFam" id="1.10.8.10:FF:000001">
    <property type="entry name" value="Elongation factor Ts"/>
    <property type="match status" value="1"/>
</dbReference>
<dbReference type="Gene3D" id="1.10.286.20">
    <property type="match status" value="1"/>
</dbReference>
<dbReference type="Gene3D" id="1.10.8.10">
    <property type="entry name" value="DNA helicase RuvA subunit, C-terminal domain"/>
    <property type="match status" value="1"/>
</dbReference>
<dbReference type="Gene3D" id="3.30.479.20">
    <property type="entry name" value="Elongation factor Ts, dimerisation domain"/>
    <property type="match status" value="2"/>
</dbReference>
<dbReference type="HAMAP" id="MF_00050">
    <property type="entry name" value="EF_Ts"/>
    <property type="match status" value="1"/>
</dbReference>
<dbReference type="InterPro" id="IPR036402">
    <property type="entry name" value="EF-Ts_dimer_sf"/>
</dbReference>
<dbReference type="InterPro" id="IPR001816">
    <property type="entry name" value="Transl_elong_EFTs/EF1B"/>
</dbReference>
<dbReference type="InterPro" id="IPR014039">
    <property type="entry name" value="Transl_elong_EFTs/EF1B_dimer"/>
</dbReference>
<dbReference type="InterPro" id="IPR009060">
    <property type="entry name" value="UBA-like_sf"/>
</dbReference>
<dbReference type="NCBIfam" id="TIGR00116">
    <property type="entry name" value="tsf"/>
    <property type="match status" value="1"/>
</dbReference>
<dbReference type="PANTHER" id="PTHR11741">
    <property type="entry name" value="ELONGATION FACTOR TS"/>
    <property type="match status" value="1"/>
</dbReference>
<dbReference type="PANTHER" id="PTHR11741:SF0">
    <property type="entry name" value="ELONGATION FACTOR TS, MITOCHONDRIAL"/>
    <property type="match status" value="1"/>
</dbReference>
<dbReference type="Pfam" id="PF00889">
    <property type="entry name" value="EF_TS"/>
    <property type="match status" value="1"/>
</dbReference>
<dbReference type="SUPFAM" id="SSF54713">
    <property type="entry name" value="Elongation factor Ts (EF-Ts), dimerisation domain"/>
    <property type="match status" value="1"/>
</dbReference>
<dbReference type="SUPFAM" id="SSF46934">
    <property type="entry name" value="UBA-like"/>
    <property type="match status" value="1"/>
</dbReference>
<protein>
    <recommendedName>
        <fullName evidence="1">Elongation factor Ts</fullName>
        <shortName evidence="1">EF-Ts</shortName>
    </recommendedName>
</protein>
<evidence type="ECO:0000255" key="1">
    <source>
        <dbReference type="HAMAP-Rule" id="MF_00050"/>
    </source>
</evidence>
<name>EFTS_CLASE</name>
<accession>B0REP5</accession>
<proteinExistence type="inferred from homology"/>
<reference key="1">
    <citation type="journal article" date="2008" name="J. Bacteriol.">
        <title>Genome of the actinomycete plant pathogen Clavibacter michiganensis subsp. sepedonicus suggests recent niche adaptation.</title>
        <authorList>
            <person name="Bentley S.D."/>
            <person name="Corton C."/>
            <person name="Brown S.E."/>
            <person name="Barron A."/>
            <person name="Clark L."/>
            <person name="Doggett J."/>
            <person name="Harris B."/>
            <person name="Ormond D."/>
            <person name="Quail M.A."/>
            <person name="May G."/>
            <person name="Francis D."/>
            <person name="Knudson D."/>
            <person name="Parkhill J."/>
            <person name="Ishimaru C.A."/>
        </authorList>
    </citation>
    <scope>NUCLEOTIDE SEQUENCE [LARGE SCALE GENOMIC DNA]</scope>
    <source>
        <strain>ATCC 33113 / DSM 20744 / JCM 9667 / LMG 2889 / ICMP 2535 / C-1</strain>
    </source>
</reference>
<organism>
    <name type="scientific">Clavibacter sepedonicus</name>
    <name type="common">Clavibacter michiganensis subsp. sepedonicus</name>
    <dbReference type="NCBI Taxonomy" id="31964"/>
    <lineage>
        <taxon>Bacteria</taxon>
        <taxon>Bacillati</taxon>
        <taxon>Actinomycetota</taxon>
        <taxon>Actinomycetes</taxon>
        <taxon>Micrococcales</taxon>
        <taxon>Microbacteriaceae</taxon>
        <taxon>Clavibacter</taxon>
    </lineage>
</organism>
<gene>
    <name evidence="1" type="primary">tsf</name>
    <name type="ordered locus">CMS0772</name>
</gene>